<gene>
    <name evidence="14" type="primary">Asic5</name>
    <name evidence="14" type="synonym">Accn5</name>
</gene>
<accession>Q9R0W5</accession>
<sequence length="495" mass="56464">MEHTEKSKGPAEKGLLGKIRRYLSKRPLPSPTDRKKFDHDFAISTSFHGIHNIAQNQNKVRKVIWLSVVLGSVSLLVWQIYSRLVNYFMWPTTTSIEVQYVEKIEFPAVTFCNLNRFQTEAVSRFGIIFFLWDIVSKVLRLQEISGNNTGSPEALDFVASHRNFSITEFVKNNGFYLNHDTLVHCEFFGKTCDPKDFKHVFTEYGNCFTFNYGENVQSKNKVSVSGRGLKLLLDVHQEEFTDNPVPGFADAGVIFVIHSPKKEPQFDGLGLSSPVGMHARVTIRQLKTIHQEYPWGECNPDIKLRNFTTYSTYGCLKECKAKHIQRLCGCLPFLLPGNGVECDLLKYYNCVSPILDHIERKGLCTMGTHNSSCPVPCEETEYPATIAYSTFPSQRATKFLAKKLNQSQEYIRENLVNIEINYSDLNYKITQQQKAVSVPELLADVGGQLGLFCGASLITIIEIIEYLFTSFYWVFIFFLLKILEMIQRTSPPQTV</sequence>
<proteinExistence type="evidence at protein level"/>
<keyword id="KW-1003">Cell membrane</keyword>
<keyword id="KW-1015">Disulfide bond</keyword>
<keyword id="KW-0325">Glycoprotein</keyword>
<keyword id="KW-0407">Ion channel</keyword>
<keyword id="KW-0406">Ion transport</keyword>
<keyword id="KW-0472">Membrane</keyword>
<keyword id="KW-1185">Reference proteome</keyword>
<keyword id="KW-0915">Sodium</keyword>
<keyword id="KW-0894">Sodium channel</keyword>
<keyword id="KW-0739">Sodium transport</keyword>
<keyword id="KW-0812">Transmembrane</keyword>
<keyword id="KW-1133">Transmembrane helix</keyword>
<keyword id="KW-0813">Transport</keyword>
<dbReference type="EMBL" id="Y19034">
    <property type="protein sequence ID" value="CAB54072.1"/>
    <property type="molecule type" value="mRNA"/>
</dbReference>
<dbReference type="RefSeq" id="NP_071563.1">
    <property type="nucleotide sequence ID" value="NM_022227.2"/>
</dbReference>
<dbReference type="SMR" id="Q9R0W5"/>
<dbReference type="FunCoup" id="Q9R0W5">
    <property type="interactions" value="1"/>
</dbReference>
<dbReference type="STRING" id="10116.ENSRNOP00000016039"/>
<dbReference type="BindingDB" id="Q9R0W5"/>
<dbReference type="ChEMBL" id="CHEMBL3621030"/>
<dbReference type="TCDB" id="1.A.6.1.3">
    <property type="family name" value="the epithelial na(+) channel (enac) family"/>
</dbReference>
<dbReference type="GlyCosmos" id="Q9R0W5">
    <property type="glycosylation" value="2 sites, No reported glycans"/>
</dbReference>
<dbReference type="GlyGen" id="Q9R0W5">
    <property type="glycosylation" value="2 sites"/>
</dbReference>
<dbReference type="PhosphoSitePlus" id="Q9R0W5"/>
<dbReference type="PaxDb" id="10116-ENSRNOP00000016039"/>
<dbReference type="Ensembl" id="ENSRNOT00000016039.5">
    <property type="protein sequence ID" value="ENSRNOP00000016039.2"/>
    <property type="gene ID" value="ENSRNOG00000011842.5"/>
</dbReference>
<dbReference type="GeneID" id="63866"/>
<dbReference type="KEGG" id="rno:63866"/>
<dbReference type="UCSC" id="RGD:69295">
    <property type="organism name" value="rat"/>
</dbReference>
<dbReference type="AGR" id="RGD:69295"/>
<dbReference type="CTD" id="51802"/>
<dbReference type="RGD" id="69295">
    <property type="gene designation" value="Asic5"/>
</dbReference>
<dbReference type="eggNOG" id="KOG4294">
    <property type="taxonomic scope" value="Eukaryota"/>
</dbReference>
<dbReference type="GeneTree" id="ENSGT00940000160549"/>
<dbReference type="HOGENOM" id="CLU_020415_4_0_1"/>
<dbReference type="InParanoid" id="Q9R0W5"/>
<dbReference type="OMA" id="HQNFSIA"/>
<dbReference type="OrthoDB" id="6021021at2759"/>
<dbReference type="PhylomeDB" id="Q9R0W5"/>
<dbReference type="TreeFam" id="TF330663"/>
<dbReference type="Reactome" id="R-RNO-2672351">
    <property type="pathway name" value="Stimuli-sensing channels"/>
</dbReference>
<dbReference type="PRO" id="PR:Q9R0W5"/>
<dbReference type="Proteomes" id="UP000002494">
    <property type="component" value="Chromosome 2"/>
</dbReference>
<dbReference type="Bgee" id="ENSRNOG00000011842">
    <property type="expression patterns" value="Expressed in liver and 1 other cell type or tissue"/>
</dbReference>
<dbReference type="GO" id="GO:0016324">
    <property type="term" value="C:apical plasma membrane"/>
    <property type="evidence" value="ECO:0000314"/>
    <property type="project" value="UniProtKB"/>
</dbReference>
<dbReference type="GO" id="GO:0005886">
    <property type="term" value="C:plasma membrane"/>
    <property type="evidence" value="ECO:0000314"/>
    <property type="project" value="UniProtKB"/>
</dbReference>
<dbReference type="GO" id="GO:0160228">
    <property type="term" value="F:bile acid-gated sodium channel activity"/>
    <property type="evidence" value="ECO:0000314"/>
    <property type="project" value="UniProtKB"/>
</dbReference>
<dbReference type="GO" id="GO:0015280">
    <property type="term" value="F:ligand-gated sodium channel activity"/>
    <property type="evidence" value="ECO:0000314"/>
    <property type="project" value="RGD"/>
</dbReference>
<dbReference type="GO" id="GO:0015252">
    <property type="term" value="F:proton channel activity"/>
    <property type="evidence" value="ECO:0000266"/>
    <property type="project" value="RGD"/>
</dbReference>
<dbReference type="GO" id="GO:0005272">
    <property type="term" value="F:sodium channel activity"/>
    <property type="evidence" value="ECO:0000266"/>
    <property type="project" value="RGD"/>
</dbReference>
<dbReference type="GO" id="GO:0019228">
    <property type="term" value="P:neuronal action potential"/>
    <property type="evidence" value="ECO:0000250"/>
    <property type="project" value="UniProtKB"/>
</dbReference>
<dbReference type="GO" id="GO:0098719">
    <property type="term" value="P:sodium ion import across plasma membrane"/>
    <property type="evidence" value="ECO:0000315"/>
    <property type="project" value="UniProtKB"/>
</dbReference>
<dbReference type="GO" id="GO:0035725">
    <property type="term" value="P:sodium ion transmembrane transport"/>
    <property type="evidence" value="ECO:0000266"/>
    <property type="project" value="RGD"/>
</dbReference>
<dbReference type="FunFam" id="2.60.470.10:FF:000006">
    <property type="entry name" value="Acid-sensing ion channel 5"/>
    <property type="match status" value="1"/>
</dbReference>
<dbReference type="FunFam" id="1.10.287.770:FF:000001">
    <property type="entry name" value="Acid-sensing ion channel subunit 1"/>
    <property type="match status" value="1"/>
</dbReference>
<dbReference type="Gene3D" id="2.60.470.10">
    <property type="entry name" value="Acid-sensing ion channels like domains"/>
    <property type="match status" value="1"/>
</dbReference>
<dbReference type="Gene3D" id="1.10.287.770">
    <property type="entry name" value="YojJ-like"/>
    <property type="match status" value="1"/>
</dbReference>
<dbReference type="InterPro" id="IPR001873">
    <property type="entry name" value="ENaC"/>
</dbReference>
<dbReference type="PANTHER" id="PTHR11690:SF286">
    <property type="entry name" value="ACID-SENSING ION CHANNEL 5"/>
    <property type="match status" value="1"/>
</dbReference>
<dbReference type="PANTHER" id="PTHR11690">
    <property type="entry name" value="AMILORIDE-SENSITIVE SODIUM CHANNEL-RELATED"/>
    <property type="match status" value="1"/>
</dbReference>
<dbReference type="Pfam" id="PF00858">
    <property type="entry name" value="ASC"/>
    <property type="match status" value="1"/>
</dbReference>
<dbReference type="PRINTS" id="PR01078">
    <property type="entry name" value="AMINACHANNEL"/>
</dbReference>
<feature type="chain" id="PRO_0000335599" description="Bile acid-sensitive ion channel">
    <location>
        <begin position="1"/>
        <end position="495"/>
    </location>
</feature>
<feature type="topological domain" description="Cytoplasmic" evidence="1">
    <location>
        <begin position="1"/>
        <end position="61"/>
    </location>
</feature>
<feature type="transmembrane region" description="Helical" evidence="3">
    <location>
        <begin position="62"/>
        <end position="82"/>
    </location>
</feature>
<feature type="topological domain" description="Extracellular" evidence="1">
    <location>
        <begin position="83"/>
        <end position="459"/>
    </location>
</feature>
<feature type="transmembrane region" description="Helical" evidence="3">
    <location>
        <begin position="460"/>
        <end position="480"/>
    </location>
</feature>
<feature type="topological domain" description="Cytoplasmic" evidence="1">
    <location>
        <begin position="481"/>
        <end position="495"/>
    </location>
</feature>
<feature type="region of interest" description="Binds the plasma membrane and stabilizes the channel in the closed state" evidence="8">
    <location>
        <begin position="1"/>
        <end position="30"/>
    </location>
</feature>
<feature type="short sequence motif" description="GAS motif; ion selectivity filter" evidence="1">
    <location>
        <begin position="454"/>
        <end position="456"/>
    </location>
</feature>
<feature type="glycosylation site" description="N-linked (GlcNAc...) asparagine" evidence="3">
    <location>
        <position position="147"/>
    </location>
</feature>
<feature type="glycosylation site" description="N-linked (GlcNAc...) asparagine" evidence="3">
    <location>
        <position position="163"/>
    </location>
</feature>
<feature type="glycosylation site" description="N-linked (GlcNAc...) asparagine" evidence="3">
    <location>
        <position position="306"/>
    </location>
</feature>
<feature type="glycosylation site" description="N-linked (GlcNAc...) asparagine" evidence="3">
    <location>
        <position position="370"/>
    </location>
</feature>
<feature type="glycosylation site" description="N-linked (GlcNAc...) asparagine" evidence="3">
    <location>
        <position position="405"/>
    </location>
</feature>
<feature type="glycosylation site" description="N-linked (GlcNAc...) asparagine" evidence="3">
    <location>
        <position position="421"/>
    </location>
</feature>
<feature type="disulfide bond" evidence="1">
    <location>
        <begin position="112"/>
        <end position="207"/>
    </location>
</feature>
<feature type="disulfide bond" evidence="1">
    <location>
        <begin position="185"/>
        <end position="192"/>
    </location>
</feature>
<feature type="disulfide bond" evidence="1">
    <location>
        <begin position="298"/>
        <end position="377"/>
    </location>
</feature>
<feature type="disulfide bond" evidence="1">
    <location>
        <begin position="315"/>
        <end position="373"/>
    </location>
</feature>
<feature type="disulfide bond" evidence="1">
    <location>
        <begin position="328"/>
        <end position="350"/>
    </location>
</feature>
<feature type="disulfide bond" evidence="1">
    <location>
        <begin position="330"/>
        <end position="342"/>
    </location>
</feature>
<feature type="mutagenesis site" description="Loss of binding and inhibition by Ca(2+)." evidence="5">
    <original>A</original>
    <variation>S</variation>
    <location>
        <position position="387"/>
    </location>
</feature>
<feature type="mutagenesis site" description="Novel constitutive but weak cation channel activity." evidence="4">
    <original>A</original>
    <variation>C</variation>
    <variation>S</variation>
    <location>
        <position position="443"/>
    </location>
</feature>
<feature type="mutagenesis site" description="Novel constitutive cation channel activity." evidence="4">
    <original>A</original>
    <variation>F</variation>
    <variation>T</variation>
    <variation>V</variation>
    <location>
        <position position="443"/>
    </location>
</feature>
<feature type="mutagenesis site" description="Novel constitutive intermediate cation channel activity." evidence="4">
    <original>A</original>
    <variation>K</variation>
    <location>
        <position position="443"/>
    </location>
</feature>
<evidence type="ECO:0000250" key="1">
    <source>
        <dbReference type="UniProtKB" id="P78348"/>
    </source>
</evidence>
<evidence type="ECO:0000250" key="2">
    <source>
        <dbReference type="UniProtKB" id="Q9R0Y1"/>
    </source>
</evidence>
<evidence type="ECO:0000255" key="3"/>
<evidence type="ECO:0000269" key="4">
    <source>
    </source>
</evidence>
<evidence type="ECO:0000269" key="5">
    <source>
    </source>
</evidence>
<evidence type="ECO:0000269" key="6">
    <source>
    </source>
</evidence>
<evidence type="ECO:0000269" key="7">
    <source>
    </source>
</evidence>
<evidence type="ECO:0000269" key="8">
    <source>
    </source>
</evidence>
<evidence type="ECO:0000269" key="9">
    <source>
    </source>
</evidence>
<evidence type="ECO:0000303" key="10">
    <source>
    </source>
</evidence>
<evidence type="ECO:0000303" key="11">
    <source>
    </source>
</evidence>
<evidence type="ECO:0000305" key="12"/>
<evidence type="ECO:0000305" key="13">
    <source>
    </source>
</evidence>
<evidence type="ECO:0000312" key="14">
    <source>
        <dbReference type="RGD" id="69295"/>
    </source>
</evidence>
<name>ASIC5_RAT</name>
<protein>
    <recommendedName>
        <fullName evidence="11">Bile acid-sensitive ion channel</fullName>
        <shortName evidence="11">BASIC</shortName>
    </recommendedName>
    <alternativeName>
        <fullName evidence="14">Acid-sensing ion channel subunit family member 5</fullName>
    </alternativeName>
    <alternativeName>
        <fullName evidence="14">Amiloride-sensitive cation channel 5</fullName>
    </alternativeName>
    <alternativeName>
        <fullName evidence="10">Brain-liver-intestine amiloride-sensitive Na(+) channel</fullName>
        <shortName evidence="10">BLINaC</shortName>
    </alternativeName>
</protein>
<organism>
    <name type="scientific">Rattus norvegicus</name>
    <name type="common">Rat</name>
    <dbReference type="NCBI Taxonomy" id="10116"/>
    <lineage>
        <taxon>Eukaryota</taxon>
        <taxon>Metazoa</taxon>
        <taxon>Chordata</taxon>
        <taxon>Craniata</taxon>
        <taxon>Vertebrata</taxon>
        <taxon>Euteleostomi</taxon>
        <taxon>Mammalia</taxon>
        <taxon>Eutheria</taxon>
        <taxon>Euarchontoglires</taxon>
        <taxon>Glires</taxon>
        <taxon>Rodentia</taxon>
        <taxon>Myomorpha</taxon>
        <taxon>Muroidea</taxon>
        <taxon>Muridae</taxon>
        <taxon>Murinae</taxon>
        <taxon>Rattus</taxon>
    </lineage>
</organism>
<reference key="1">
    <citation type="journal article" date="1999" name="J. Physiol. (Lond.)">
        <title>Cloning and functional expression of a novel degenerin-like Na+ channel gene in mammals.</title>
        <authorList>
            <person name="Sakai H."/>
            <person name="Lingueglia E."/>
            <person name="Champigny G."/>
            <person name="Mattei M.-G."/>
            <person name="Lazdunski M."/>
        </authorList>
    </citation>
    <scope>NUCLEOTIDE SEQUENCE [MRNA]</scope>
    <scope>FUNCTION</scope>
    <scope>TRANSPORTER ACTIVITY</scope>
    <scope>ACTIVITY REGULATION</scope>
    <scope>SUBCELLULAR LOCATION</scope>
    <scope>TISSUE SPECIFICITY</scope>
    <scope>MUTAGENESIS OF ALA-443</scope>
    <source>
        <strain>Wistar</strain>
        <tissue>Brain</tissue>
        <tissue>Intestine</tissue>
        <tissue>Liver</tissue>
    </source>
</reference>
<reference key="2">
    <citation type="journal article" date="2010" name="J. Biol. Chem.">
        <title>A single amino acid tunes Ca2+ inhibition of brain liver intestine Na+ channel (BLINaC).</title>
        <authorList>
            <person name="Wiemuth D."/>
            <person name="Gruender S."/>
        </authorList>
    </citation>
    <scope>FUNCTION</scope>
    <scope>TRANSPORTER ACTIVITY</scope>
    <scope>ACTIVITY REGULATION</scope>
    <scope>MUTAGENESIS OF ALA-387</scope>
</reference>
<reference key="3">
    <citation type="journal article" date="2012" name="FASEB J.">
        <title>BASIC--a bile acid-sensitive ion channel highly expressed in bile ducts.</title>
        <authorList>
            <person name="Wiemuth D."/>
            <person name="Sahin H."/>
            <person name="Falkenburger B.H."/>
            <person name="Lefevre C.M."/>
            <person name="Wasmuth H.E."/>
            <person name="Gruender S."/>
        </authorList>
    </citation>
    <scope>FUNCTION</scope>
    <scope>TRANSPORTER ACTIVITY</scope>
    <scope>SUBCELLULAR LOCATION</scope>
    <scope>TISSUE SPECIFICITY</scope>
</reference>
<reference key="4">
    <citation type="journal article" date="2014" name="PLoS ONE">
        <title>The bile acid-sensitive ion channel (BASIC) is activated by alterations of its membrane environment.</title>
        <authorList>
            <person name="Schmidt A."/>
            <person name="Lenzig P."/>
            <person name="Oslender-Bujotzek A."/>
            <person name="Kusch J."/>
            <person name="Lucas S.D."/>
            <person name="Gruender S."/>
            <person name="Wiemuth D."/>
        </authorList>
    </citation>
    <scope>FUNCTION</scope>
</reference>
<reference key="5">
    <citation type="journal article" date="2016" name="J. Biol. Chem.">
        <title>A Cytosolic Amphiphilic alpha-Helix Controls the Activity of the Bile Acid-sensitive Ion Channel (BASIC).</title>
        <authorList>
            <person name="Schmidt A."/>
            <person name="Loehrer D."/>
            <person name="Alsop R.J."/>
            <person name="Lenzig P."/>
            <person name="Oslender-Bujotzek A."/>
            <person name="Wirtz M."/>
            <person name="Rheinstaedter M.C."/>
            <person name="Gruender S."/>
            <person name="Wiemuth D."/>
        </authorList>
    </citation>
    <scope>FUNCTION</scope>
    <scope>TRANSPORTER ACTIVITY</scope>
    <scope>ACTIVITY REGULATION</scope>
    <scope>SUBCELLULAR LOCATION</scope>
    <scope>REGION</scope>
</reference>
<reference key="6">
    <citation type="journal article" date="2021" name="Pflugers Arch.">
        <title>The bile acid-sensitive ion channel (BASIC) mediates bile acid-dependent currents in bile duct epithelial cells.</title>
        <authorList>
            <person name="Wiegreffe S."/>
            <person name="Loehrer D."/>
            <person name="Wirtz M."/>
            <person name="Wiemuth D."/>
        </authorList>
    </citation>
    <scope>FUNCTION</scope>
    <scope>TRANSPORTER ACTIVITY</scope>
    <scope>ACTIVITY REGULATION</scope>
    <scope>SUBCELLULAR LOCATION</scope>
</reference>
<comment type="function">
    <text evidence="2 4 5 6 7 8 9">Forms bile acid-gated sodium channels and may play a role in bile acid-dependent absorption and secretion by epithelial cells of the bile ducts (PubMed:10457052, PubMed:22735174, PubMed:27679529, PubMed:34549327). Displays high selectivity for sodium ions but can also permit the permeation of other cations (PubMed:10457052, PubMed:20656685, PubMed:27679529). The gating could be indirect and the consequence of alterations of the membrane environment of the channel by bile acids (PubMed:25360526, PubMed:27679529). As a sodium channel of type II unipolar brush cells of the vestibulocerebellum, controlling the electrical activity of these cells, could play a role in motor coordination and balance (By similarity).</text>
</comment>
<comment type="catalytic activity">
    <reaction evidence="4 6 8">
        <text>Na(+)(in) = Na(+)(out)</text>
        <dbReference type="Rhea" id="RHEA:34963"/>
        <dbReference type="ChEBI" id="CHEBI:29101"/>
    </reaction>
</comment>
<comment type="catalytic activity">
    <reaction evidence="13">
        <text>Li(+)(in) = Li(+)(out)</text>
        <dbReference type="Rhea" id="RHEA:78551"/>
        <dbReference type="ChEBI" id="CHEBI:49713"/>
    </reaction>
</comment>
<comment type="catalytic activity">
    <reaction evidence="4 8">
        <text>K(+)(in) = K(+)(out)</text>
        <dbReference type="Rhea" id="RHEA:29463"/>
        <dbReference type="ChEBI" id="CHEBI:29103"/>
    </reaction>
</comment>
<comment type="catalytic activity">
    <reaction evidence="5">
        <text>H(+)(in) = H(+)(out)</text>
        <dbReference type="Rhea" id="RHEA:34979"/>
        <dbReference type="ChEBI" id="CHEBI:15378"/>
    </reaction>
</comment>
<comment type="activity regulation">
    <text evidence="4 5 8 9">Inhibited by the diuretic drug amiloride (PubMed:10457052, PubMed:20656685, PubMed:34549327). Inhibited by diminazene (PubMed:27679529, PubMed:34549327). Inhibited by extracellular Ca(2+) (PubMed:20656685).</text>
</comment>
<comment type="subunit">
    <text evidence="1">Forms homotrimeric channels.</text>
</comment>
<comment type="subcellular location">
    <subcellularLocation>
        <location evidence="9">Apical cell membrane</location>
        <topology evidence="3">Multi-pass membrane protein</topology>
    </subcellularLocation>
    <subcellularLocation>
        <location evidence="4 6 8">Cell membrane</location>
        <topology evidence="3">Multi-pass membrane protein</topology>
    </subcellularLocation>
</comment>
<comment type="tissue specificity">
    <text evidence="4 6">Expressed by cholangiocytes (at protein level) (PubMed:22735174). Detected in brain, liver, duodenum, jejunum, ileum and testis.</text>
</comment>
<comment type="similarity">
    <text evidence="12">Belongs to the amiloride-sensitive sodium channel (TC 1.A.6) family. ASIC5 subfamily.</text>
</comment>